<keyword id="KW-0963">Cytoplasm</keyword>
<keyword id="KW-0350">Heme biosynthesis</keyword>
<keyword id="KW-0408">Iron</keyword>
<keyword id="KW-0456">Lyase</keyword>
<keyword id="KW-0479">Metal-binding</keyword>
<keyword id="KW-0627">Porphyrin biosynthesis</keyword>
<keyword id="KW-1185">Reference proteome</keyword>
<gene>
    <name evidence="1" type="primary">cpfC</name>
    <name type="ordered locus">EF_1989</name>
</gene>
<sequence length="313" mass="36050">MKRTGILLVNLGTPKDSSKTEVRKYLKTFLSDRRVIKIHPIIWKPILNGIILNIRPKKSAKLYQKICTENGFPLLEYTEKQMENLKNICPEVEVTIGMSYSEPSIETALDTLLSKEIEELNVIPMYPQYSGTTVGSVFDSVMNYFIKSDRIVDIKFIRSFYNNPQYIDYFSKKINEALNESPIDAIVFSYHGIPMSYVKDGDNYPKECTKTTKLIMDKLGDIRYYQTYQSKFGPSEWLKPATDDTLKKLPSKGIKNILIVAPGFVVDCLETIEELEHENRNYFLENGGEVYKYVHPFNGDIEFAKLVKDIISL</sequence>
<dbReference type="EC" id="4.99.1.9" evidence="1"/>
<dbReference type="EMBL" id="AE016830">
    <property type="protein sequence ID" value="AAO81734.1"/>
    <property type="molecule type" value="Genomic_DNA"/>
</dbReference>
<dbReference type="RefSeq" id="NP_815664.1">
    <property type="nucleotide sequence ID" value="NC_004668.1"/>
</dbReference>
<dbReference type="SMR" id="Q833G5"/>
<dbReference type="STRING" id="226185.EF_1989"/>
<dbReference type="DNASU" id="1200865"/>
<dbReference type="EnsemblBacteria" id="AAO81734">
    <property type="protein sequence ID" value="AAO81734"/>
    <property type="gene ID" value="EF_1989"/>
</dbReference>
<dbReference type="KEGG" id="efa:EF1989"/>
<dbReference type="PATRIC" id="fig|226185.9.peg.1865"/>
<dbReference type="eggNOG" id="COG0276">
    <property type="taxonomic scope" value="Bacteria"/>
</dbReference>
<dbReference type="HOGENOM" id="CLU_018884_0_0_9"/>
<dbReference type="UniPathway" id="UPA00252"/>
<dbReference type="Proteomes" id="UP000001415">
    <property type="component" value="Chromosome"/>
</dbReference>
<dbReference type="GO" id="GO:0005737">
    <property type="term" value="C:cytoplasm"/>
    <property type="evidence" value="ECO:0007669"/>
    <property type="project" value="UniProtKB-SubCell"/>
</dbReference>
<dbReference type="GO" id="GO:0004325">
    <property type="term" value="F:ferrochelatase activity"/>
    <property type="evidence" value="ECO:0007669"/>
    <property type="project" value="UniProtKB-UniRule"/>
</dbReference>
<dbReference type="GO" id="GO:0046872">
    <property type="term" value="F:metal ion binding"/>
    <property type="evidence" value="ECO:0007669"/>
    <property type="project" value="UniProtKB-KW"/>
</dbReference>
<dbReference type="GO" id="GO:0006783">
    <property type="term" value="P:heme biosynthetic process"/>
    <property type="evidence" value="ECO:0007669"/>
    <property type="project" value="UniProtKB-UniRule"/>
</dbReference>
<dbReference type="CDD" id="cd00419">
    <property type="entry name" value="Ferrochelatase_C"/>
    <property type="match status" value="1"/>
</dbReference>
<dbReference type="CDD" id="cd03411">
    <property type="entry name" value="Ferrochelatase_N"/>
    <property type="match status" value="1"/>
</dbReference>
<dbReference type="FunFam" id="3.40.50.1400:FF:000002">
    <property type="entry name" value="Ferrochelatase"/>
    <property type="match status" value="1"/>
</dbReference>
<dbReference type="Gene3D" id="3.40.50.1400">
    <property type="match status" value="2"/>
</dbReference>
<dbReference type="HAMAP" id="MF_00323">
    <property type="entry name" value="Ferrochelatase"/>
    <property type="match status" value="1"/>
</dbReference>
<dbReference type="InterPro" id="IPR001015">
    <property type="entry name" value="Ferrochelatase"/>
</dbReference>
<dbReference type="InterPro" id="IPR019772">
    <property type="entry name" value="Ferrochelatase_AS"/>
</dbReference>
<dbReference type="InterPro" id="IPR033644">
    <property type="entry name" value="Ferrochelatase_C"/>
</dbReference>
<dbReference type="InterPro" id="IPR033659">
    <property type="entry name" value="Ferrochelatase_N"/>
</dbReference>
<dbReference type="NCBIfam" id="TIGR00109">
    <property type="entry name" value="hemH"/>
    <property type="match status" value="1"/>
</dbReference>
<dbReference type="PANTHER" id="PTHR11108">
    <property type="entry name" value="FERROCHELATASE"/>
    <property type="match status" value="1"/>
</dbReference>
<dbReference type="PANTHER" id="PTHR11108:SF1">
    <property type="entry name" value="FERROCHELATASE, MITOCHONDRIAL"/>
    <property type="match status" value="1"/>
</dbReference>
<dbReference type="Pfam" id="PF00762">
    <property type="entry name" value="Ferrochelatase"/>
    <property type="match status" value="1"/>
</dbReference>
<dbReference type="SUPFAM" id="SSF53800">
    <property type="entry name" value="Chelatase"/>
    <property type="match status" value="1"/>
</dbReference>
<dbReference type="PROSITE" id="PS00534">
    <property type="entry name" value="FERROCHELATASE"/>
    <property type="match status" value="1"/>
</dbReference>
<organism>
    <name type="scientific">Enterococcus faecalis (strain ATCC 700802 / V583)</name>
    <dbReference type="NCBI Taxonomy" id="226185"/>
    <lineage>
        <taxon>Bacteria</taxon>
        <taxon>Bacillati</taxon>
        <taxon>Bacillota</taxon>
        <taxon>Bacilli</taxon>
        <taxon>Lactobacillales</taxon>
        <taxon>Enterococcaceae</taxon>
        <taxon>Enterococcus</taxon>
    </lineage>
</organism>
<accession>Q833G5</accession>
<name>CPFC_ENTFA</name>
<comment type="function">
    <text evidence="1">Involved in coproporphyrin-dependent heme b biosynthesis. Catalyzes the insertion of ferrous iron into coproporphyrin III to form Fe-coproporphyrin III.</text>
</comment>
<comment type="catalytic activity">
    <reaction evidence="1">
        <text>Fe-coproporphyrin III + 2 H(+) = coproporphyrin III + Fe(2+)</text>
        <dbReference type="Rhea" id="RHEA:49572"/>
        <dbReference type="ChEBI" id="CHEBI:15378"/>
        <dbReference type="ChEBI" id="CHEBI:29033"/>
        <dbReference type="ChEBI" id="CHEBI:68438"/>
        <dbReference type="ChEBI" id="CHEBI:131725"/>
        <dbReference type="EC" id="4.99.1.9"/>
    </reaction>
    <physiologicalReaction direction="right-to-left" evidence="1">
        <dbReference type="Rhea" id="RHEA:49574"/>
    </physiologicalReaction>
</comment>
<comment type="pathway">
    <text evidence="1">Porphyrin-containing compound metabolism; protoheme biosynthesis.</text>
</comment>
<comment type="subcellular location">
    <subcellularLocation>
        <location evidence="1">Cytoplasm</location>
    </subcellularLocation>
</comment>
<comment type="similarity">
    <text evidence="1">Belongs to the ferrochelatase family.</text>
</comment>
<reference key="1">
    <citation type="journal article" date="2003" name="Science">
        <title>Role of mobile DNA in the evolution of vancomycin-resistant Enterococcus faecalis.</title>
        <authorList>
            <person name="Paulsen I.T."/>
            <person name="Banerjei L."/>
            <person name="Myers G.S.A."/>
            <person name="Nelson K.E."/>
            <person name="Seshadri R."/>
            <person name="Read T.D."/>
            <person name="Fouts D.E."/>
            <person name="Eisen J.A."/>
            <person name="Gill S.R."/>
            <person name="Heidelberg J.F."/>
            <person name="Tettelin H."/>
            <person name="Dodson R.J."/>
            <person name="Umayam L.A."/>
            <person name="Brinkac L.M."/>
            <person name="Beanan M.J."/>
            <person name="Daugherty S.C."/>
            <person name="DeBoy R.T."/>
            <person name="Durkin S.A."/>
            <person name="Kolonay J.F."/>
            <person name="Madupu R."/>
            <person name="Nelson W.C."/>
            <person name="Vamathevan J.J."/>
            <person name="Tran B."/>
            <person name="Upton J."/>
            <person name="Hansen T."/>
            <person name="Shetty J."/>
            <person name="Khouri H.M."/>
            <person name="Utterback T.R."/>
            <person name="Radune D."/>
            <person name="Ketchum K.A."/>
            <person name="Dougherty B.A."/>
            <person name="Fraser C.M."/>
        </authorList>
    </citation>
    <scope>NUCLEOTIDE SEQUENCE [LARGE SCALE GENOMIC DNA]</scope>
    <source>
        <strain>ATCC 700802 / V583</strain>
    </source>
</reference>
<evidence type="ECO:0000255" key="1">
    <source>
        <dbReference type="HAMAP-Rule" id="MF_00323"/>
    </source>
</evidence>
<feature type="chain" id="PRO_0000175141" description="Coproporphyrin III ferrochelatase">
    <location>
        <begin position="1"/>
        <end position="313"/>
    </location>
</feature>
<feature type="binding site" evidence="1">
    <location>
        <position position="191"/>
    </location>
    <ligand>
        <name>Fe(2+)</name>
        <dbReference type="ChEBI" id="CHEBI:29033"/>
    </ligand>
</feature>
<feature type="binding site" evidence="1">
    <location>
        <position position="270"/>
    </location>
    <ligand>
        <name>Fe(2+)</name>
        <dbReference type="ChEBI" id="CHEBI:29033"/>
    </ligand>
</feature>
<proteinExistence type="inferred from homology"/>
<protein>
    <recommendedName>
        <fullName evidence="1">Coproporphyrin III ferrochelatase</fullName>
        <ecNumber evidence="1">4.99.1.9</ecNumber>
    </recommendedName>
</protein>